<accession>A5AA68</accession>
<keyword id="KW-0067">ATP-binding</keyword>
<keyword id="KW-0347">Helicase</keyword>
<keyword id="KW-0378">Hydrolase</keyword>
<keyword id="KW-0547">Nucleotide-binding</keyword>
<keyword id="KW-0539">Nucleus</keyword>
<keyword id="KW-1185">Reference proteome</keyword>
<keyword id="KW-0690">Ribosome biogenesis</keyword>
<keyword id="KW-0694">RNA-binding</keyword>
<keyword id="KW-0698">rRNA processing</keyword>
<dbReference type="EC" id="3.6.4.13"/>
<dbReference type="EMBL" id="AM270015">
    <property type="protein sequence ID" value="CAK44220.1"/>
    <property type="molecule type" value="Genomic_DNA"/>
</dbReference>
<dbReference type="RefSeq" id="XP_001399810.1">
    <property type="nucleotide sequence ID" value="XM_001399773.1"/>
</dbReference>
<dbReference type="SMR" id="A5AA68"/>
<dbReference type="EnsemblFungi" id="CAK44220">
    <property type="protein sequence ID" value="CAK44220"/>
    <property type="gene ID" value="An02g06750"/>
</dbReference>
<dbReference type="GeneID" id="4979165"/>
<dbReference type="KEGG" id="ang:An02g06750"/>
<dbReference type="VEuPathDB" id="FungiDB:An02g06750"/>
<dbReference type="HOGENOM" id="CLU_003041_1_1_1"/>
<dbReference type="Proteomes" id="UP000006706">
    <property type="component" value="Chromosome 4R"/>
</dbReference>
<dbReference type="GO" id="GO:0005829">
    <property type="term" value="C:cytosol"/>
    <property type="evidence" value="ECO:0007669"/>
    <property type="project" value="TreeGrafter"/>
</dbReference>
<dbReference type="GO" id="GO:0005730">
    <property type="term" value="C:nucleolus"/>
    <property type="evidence" value="ECO:0007669"/>
    <property type="project" value="UniProtKB-SubCell"/>
</dbReference>
<dbReference type="GO" id="GO:0005524">
    <property type="term" value="F:ATP binding"/>
    <property type="evidence" value="ECO:0007669"/>
    <property type="project" value="UniProtKB-KW"/>
</dbReference>
<dbReference type="GO" id="GO:0016887">
    <property type="term" value="F:ATP hydrolysis activity"/>
    <property type="evidence" value="ECO:0007669"/>
    <property type="project" value="RHEA"/>
</dbReference>
<dbReference type="GO" id="GO:0003723">
    <property type="term" value="F:RNA binding"/>
    <property type="evidence" value="ECO:0007669"/>
    <property type="project" value="UniProtKB-KW"/>
</dbReference>
<dbReference type="GO" id="GO:0003724">
    <property type="term" value="F:RNA helicase activity"/>
    <property type="evidence" value="ECO:0007669"/>
    <property type="project" value="UniProtKB-EC"/>
</dbReference>
<dbReference type="GO" id="GO:0006364">
    <property type="term" value="P:rRNA processing"/>
    <property type="evidence" value="ECO:0007669"/>
    <property type="project" value="UniProtKB-KW"/>
</dbReference>
<dbReference type="CDD" id="cd17955">
    <property type="entry name" value="DEADc_DDX49"/>
    <property type="match status" value="1"/>
</dbReference>
<dbReference type="CDD" id="cd18787">
    <property type="entry name" value="SF2_C_DEAD"/>
    <property type="match status" value="1"/>
</dbReference>
<dbReference type="Gene3D" id="3.40.50.300">
    <property type="entry name" value="P-loop containing nucleotide triphosphate hydrolases"/>
    <property type="match status" value="2"/>
</dbReference>
<dbReference type="InterPro" id="IPR011545">
    <property type="entry name" value="DEAD/DEAH_box_helicase_dom"/>
</dbReference>
<dbReference type="InterPro" id="IPR050079">
    <property type="entry name" value="DEAD_box_RNA_helicase"/>
</dbReference>
<dbReference type="InterPro" id="IPR014001">
    <property type="entry name" value="Helicase_ATP-bd"/>
</dbReference>
<dbReference type="InterPro" id="IPR001650">
    <property type="entry name" value="Helicase_C-like"/>
</dbReference>
<dbReference type="InterPro" id="IPR027417">
    <property type="entry name" value="P-loop_NTPase"/>
</dbReference>
<dbReference type="InterPro" id="IPR000629">
    <property type="entry name" value="RNA-helicase_DEAD-box_CS"/>
</dbReference>
<dbReference type="InterPro" id="IPR014014">
    <property type="entry name" value="RNA_helicase_DEAD_Q_motif"/>
</dbReference>
<dbReference type="PANTHER" id="PTHR47959:SF24">
    <property type="entry name" value="ATP-DEPENDENT RNA HELICASE"/>
    <property type="match status" value="1"/>
</dbReference>
<dbReference type="PANTHER" id="PTHR47959">
    <property type="entry name" value="ATP-DEPENDENT RNA HELICASE RHLE-RELATED"/>
    <property type="match status" value="1"/>
</dbReference>
<dbReference type="Pfam" id="PF00270">
    <property type="entry name" value="DEAD"/>
    <property type="match status" value="1"/>
</dbReference>
<dbReference type="Pfam" id="PF00271">
    <property type="entry name" value="Helicase_C"/>
    <property type="match status" value="1"/>
</dbReference>
<dbReference type="SMART" id="SM00487">
    <property type="entry name" value="DEXDc"/>
    <property type="match status" value="1"/>
</dbReference>
<dbReference type="SMART" id="SM00490">
    <property type="entry name" value="HELICc"/>
    <property type="match status" value="1"/>
</dbReference>
<dbReference type="SUPFAM" id="SSF52540">
    <property type="entry name" value="P-loop containing nucleoside triphosphate hydrolases"/>
    <property type="match status" value="1"/>
</dbReference>
<dbReference type="PROSITE" id="PS00039">
    <property type="entry name" value="DEAD_ATP_HELICASE"/>
    <property type="match status" value="1"/>
</dbReference>
<dbReference type="PROSITE" id="PS51192">
    <property type="entry name" value="HELICASE_ATP_BIND_1"/>
    <property type="match status" value="1"/>
</dbReference>
<dbReference type="PROSITE" id="PS51194">
    <property type="entry name" value="HELICASE_CTER"/>
    <property type="match status" value="1"/>
</dbReference>
<dbReference type="PROSITE" id="PS51195">
    <property type="entry name" value="Q_MOTIF"/>
    <property type="match status" value="1"/>
</dbReference>
<protein>
    <recommendedName>
        <fullName>ATP-dependent RNA helicase dbp8</fullName>
        <ecNumber>3.6.4.13</ecNumber>
    </recommendedName>
</protein>
<name>DBP8_ASPNC</name>
<comment type="function">
    <text evidence="1">ATP-binding RNA helicase involved in 40S ribosomal subunit biogenesis and is required for the normal formation of 18S rRNAs through pre-rRNA processing at A0, A1 and A2 sites. Required for vegetative growth (By similarity).</text>
</comment>
<comment type="catalytic activity">
    <reaction>
        <text>ATP + H2O = ADP + phosphate + H(+)</text>
        <dbReference type="Rhea" id="RHEA:13065"/>
        <dbReference type="ChEBI" id="CHEBI:15377"/>
        <dbReference type="ChEBI" id="CHEBI:15378"/>
        <dbReference type="ChEBI" id="CHEBI:30616"/>
        <dbReference type="ChEBI" id="CHEBI:43474"/>
        <dbReference type="ChEBI" id="CHEBI:456216"/>
        <dbReference type="EC" id="3.6.4.13"/>
    </reaction>
</comment>
<comment type="subcellular location">
    <subcellularLocation>
        <location evidence="1">Nucleus</location>
        <location evidence="1">Nucleolus</location>
    </subcellularLocation>
</comment>
<comment type="domain">
    <text>The Q motif is unique to and characteristic of the DEAD box family of RNA helicases and controls ATP binding and hydrolysis.</text>
</comment>
<comment type="similarity">
    <text evidence="5">Belongs to the DEAD box helicase family. DDX49/DBP8 subfamily.</text>
</comment>
<sequence length="522" mass="57027">MAPSSSPEPVVDESHESSDSEVEQTELQSRAPKRRRLSESSTDSYVAPAPLPTLSRIKKKGADEENKPATSDKDEPVLIKDALEIGLNDAQNSFASLNVAPWLIGSLTTMAVRKPTAIQKACIPEILNGRDCIGGSRTGSGKTIAFSVPMLQKWAEDPFGIFGLVLTPTRELALQIYEQIKAISAPQSMKPLLITGGTDMRPQAVALAQRPHVVIATPGRLADHINTSGSDTIRGLKRVRMVVLDEADRLLAPGHGSMLPDVETCLSALPPSSERQTLLFTATLTPEVRALKSMPRPSTKPPIFVTEISTENNASIPPTLKQTYLKVPMTHREAFLHVLLSTEANASKPAIIFCNHTKTADLLERMLRRLSHRVTSLHSLLPQSERNANLARFRASAARLLVATDVASRGLDIPSVELVVNFDVPRNPDDYVHRVGRTARAGRKGESVTLVGQRDVSLVLAIEERVGRQMEEWSEEGVSVEGRVVRTGVLKEVGEAKREAAGEIEEGRDVLGRKRNKLKKVR</sequence>
<reference key="1">
    <citation type="journal article" date="2007" name="Nat. Biotechnol.">
        <title>Genome sequencing and analysis of the versatile cell factory Aspergillus niger CBS 513.88.</title>
        <authorList>
            <person name="Pel H.J."/>
            <person name="de Winde J.H."/>
            <person name="Archer D.B."/>
            <person name="Dyer P.S."/>
            <person name="Hofmann G."/>
            <person name="Schaap P.J."/>
            <person name="Turner G."/>
            <person name="de Vries R.P."/>
            <person name="Albang R."/>
            <person name="Albermann K."/>
            <person name="Andersen M.R."/>
            <person name="Bendtsen J.D."/>
            <person name="Benen J.A.E."/>
            <person name="van den Berg M."/>
            <person name="Breestraat S."/>
            <person name="Caddick M.X."/>
            <person name="Contreras R."/>
            <person name="Cornell M."/>
            <person name="Coutinho P.M."/>
            <person name="Danchin E.G.J."/>
            <person name="Debets A.J.M."/>
            <person name="Dekker P."/>
            <person name="van Dijck P.W.M."/>
            <person name="van Dijk A."/>
            <person name="Dijkhuizen L."/>
            <person name="Driessen A.J.M."/>
            <person name="d'Enfert C."/>
            <person name="Geysens S."/>
            <person name="Goosen C."/>
            <person name="Groot G.S.P."/>
            <person name="de Groot P.W.J."/>
            <person name="Guillemette T."/>
            <person name="Henrissat B."/>
            <person name="Herweijer M."/>
            <person name="van den Hombergh J.P.T.W."/>
            <person name="van den Hondel C.A.M.J.J."/>
            <person name="van der Heijden R.T.J.M."/>
            <person name="van der Kaaij R.M."/>
            <person name="Klis F.M."/>
            <person name="Kools H.J."/>
            <person name="Kubicek C.P."/>
            <person name="van Kuyk P.A."/>
            <person name="Lauber J."/>
            <person name="Lu X."/>
            <person name="van der Maarel M.J.E.C."/>
            <person name="Meulenberg R."/>
            <person name="Menke H."/>
            <person name="Mortimer M.A."/>
            <person name="Nielsen J."/>
            <person name="Oliver S.G."/>
            <person name="Olsthoorn M."/>
            <person name="Pal K."/>
            <person name="van Peij N.N.M.E."/>
            <person name="Ram A.F.J."/>
            <person name="Rinas U."/>
            <person name="Roubos J.A."/>
            <person name="Sagt C.M.J."/>
            <person name="Schmoll M."/>
            <person name="Sun J."/>
            <person name="Ussery D."/>
            <person name="Varga J."/>
            <person name="Vervecken W."/>
            <person name="van de Vondervoort P.J.J."/>
            <person name="Wedler H."/>
            <person name="Woesten H.A.B."/>
            <person name="Zeng A.-P."/>
            <person name="van Ooyen A.J.J."/>
            <person name="Visser J."/>
            <person name="Stam H."/>
        </authorList>
    </citation>
    <scope>NUCLEOTIDE SEQUENCE [LARGE SCALE GENOMIC DNA]</scope>
    <source>
        <strain>ATCC MYA-4892 / CBS 513.88 / FGSC A1513</strain>
    </source>
</reference>
<gene>
    <name type="primary">dbp8</name>
    <name type="ORF">An02g06750</name>
</gene>
<organism>
    <name type="scientific">Aspergillus niger (strain ATCC MYA-4892 / CBS 513.88 / FGSC A1513)</name>
    <dbReference type="NCBI Taxonomy" id="425011"/>
    <lineage>
        <taxon>Eukaryota</taxon>
        <taxon>Fungi</taxon>
        <taxon>Dikarya</taxon>
        <taxon>Ascomycota</taxon>
        <taxon>Pezizomycotina</taxon>
        <taxon>Eurotiomycetes</taxon>
        <taxon>Eurotiomycetidae</taxon>
        <taxon>Eurotiales</taxon>
        <taxon>Aspergillaceae</taxon>
        <taxon>Aspergillus</taxon>
        <taxon>Aspergillus subgen. Circumdati</taxon>
    </lineage>
</organism>
<evidence type="ECO:0000250" key="1"/>
<evidence type="ECO:0000255" key="2">
    <source>
        <dbReference type="PROSITE-ProRule" id="PRU00541"/>
    </source>
</evidence>
<evidence type="ECO:0000255" key="3">
    <source>
        <dbReference type="PROSITE-ProRule" id="PRU00542"/>
    </source>
</evidence>
<evidence type="ECO:0000256" key="4">
    <source>
        <dbReference type="SAM" id="MobiDB-lite"/>
    </source>
</evidence>
<evidence type="ECO:0000305" key="5"/>
<feature type="chain" id="PRO_0000294654" description="ATP-dependent RNA helicase dbp8">
    <location>
        <begin position="1"/>
        <end position="522"/>
    </location>
</feature>
<feature type="domain" description="Helicase ATP-binding" evidence="2">
    <location>
        <begin position="123"/>
        <end position="302"/>
    </location>
</feature>
<feature type="domain" description="Helicase C-terminal" evidence="3">
    <location>
        <begin position="319"/>
        <end position="481"/>
    </location>
</feature>
<feature type="region of interest" description="Disordered" evidence="4">
    <location>
        <begin position="1"/>
        <end position="75"/>
    </location>
</feature>
<feature type="short sequence motif" description="Q motif">
    <location>
        <begin position="92"/>
        <end position="120"/>
    </location>
</feature>
<feature type="short sequence motif" description="DEAD box">
    <location>
        <begin position="245"/>
        <end position="248"/>
    </location>
</feature>
<feature type="compositionally biased region" description="Basic and acidic residues" evidence="4">
    <location>
        <begin position="60"/>
        <end position="75"/>
    </location>
</feature>
<feature type="binding site" evidence="2">
    <location>
        <begin position="136"/>
        <end position="143"/>
    </location>
    <ligand>
        <name>ATP</name>
        <dbReference type="ChEBI" id="CHEBI:30616"/>
    </ligand>
</feature>
<proteinExistence type="inferred from homology"/>